<dbReference type="EMBL" id="CR858640">
    <property type="protein sequence ID" value="CAH90856.1"/>
    <property type="molecule type" value="mRNA"/>
</dbReference>
<dbReference type="EMBL" id="ABGA01112807">
    <property type="status" value="NOT_ANNOTATED_CDS"/>
    <property type="molecule type" value="Genomic_DNA"/>
</dbReference>
<dbReference type="EMBL" id="ABGA01112815">
    <property type="status" value="NOT_ANNOTATED_CDS"/>
    <property type="molecule type" value="Genomic_DNA"/>
</dbReference>
<dbReference type="EMBL" id="ABGA01112806">
    <property type="status" value="NOT_ANNOTATED_CDS"/>
    <property type="molecule type" value="Genomic_DNA"/>
</dbReference>
<dbReference type="EMBL" id="ABGA01112808">
    <property type="status" value="NOT_ANNOTATED_CDS"/>
    <property type="molecule type" value="Genomic_DNA"/>
</dbReference>
<dbReference type="EMBL" id="ABGA01112809">
    <property type="status" value="NOT_ANNOTATED_CDS"/>
    <property type="molecule type" value="Genomic_DNA"/>
</dbReference>
<dbReference type="EMBL" id="ABGA01112810">
    <property type="status" value="NOT_ANNOTATED_CDS"/>
    <property type="molecule type" value="Genomic_DNA"/>
</dbReference>
<dbReference type="EMBL" id="ABGA01112811">
    <property type="status" value="NOT_ANNOTATED_CDS"/>
    <property type="molecule type" value="Genomic_DNA"/>
</dbReference>
<dbReference type="EMBL" id="ABGA01112812">
    <property type="status" value="NOT_ANNOTATED_CDS"/>
    <property type="molecule type" value="Genomic_DNA"/>
</dbReference>
<dbReference type="EMBL" id="ABGA01112813">
    <property type="status" value="NOT_ANNOTATED_CDS"/>
    <property type="molecule type" value="Genomic_DNA"/>
</dbReference>
<dbReference type="EMBL" id="ABGA01112814">
    <property type="status" value="NOT_ANNOTATED_CDS"/>
    <property type="molecule type" value="Genomic_DNA"/>
</dbReference>
<dbReference type="RefSeq" id="NP_001127343.1">
    <molecule id="Q5RBK4-2"/>
    <property type="nucleotide sequence ID" value="NM_001133871.1"/>
</dbReference>
<dbReference type="RefSeq" id="XP_009233127.1">
    <molecule id="Q5RBK4-1"/>
    <property type="nucleotide sequence ID" value="XM_009234852.4"/>
</dbReference>
<dbReference type="RefSeq" id="XP_054400075.1">
    <molecule id="Q5RBK4-1"/>
    <property type="nucleotide sequence ID" value="XM_054544100.2"/>
</dbReference>
<dbReference type="SMR" id="Q5RBK4"/>
<dbReference type="FunCoup" id="Q5RBK4">
    <property type="interactions" value="920"/>
</dbReference>
<dbReference type="STRING" id="9601.ENSPPYP00000023985"/>
<dbReference type="Ensembl" id="ENSPPYT00000033251.2">
    <molecule id="Q5RBK4-1"/>
    <property type="protein sequence ID" value="ENSPPYP00000023985.1"/>
    <property type="gene ID" value="ENSPPYG00000020349.3"/>
</dbReference>
<dbReference type="GeneID" id="100174406"/>
<dbReference type="KEGG" id="pon:100174406"/>
<dbReference type="CTD" id="1184"/>
<dbReference type="eggNOG" id="KOG0475">
    <property type="taxonomic scope" value="Eukaryota"/>
</dbReference>
<dbReference type="GeneTree" id="ENSGT00940000153763"/>
<dbReference type="HOGENOM" id="CLU_003181_2_1_1"/>
<dbReference type="InParanoid" id="Q5RBK4"/>
<dbReference type="OrthoDB" id="44789at2759"/>
<dbReference type="TreeFam" id="TF313867"/>
<dbReference type="Proteomes" id="UP000001595">
    <property type="component" value="Chromosome X"/>
</dbReference>
<dbReference type="GO" id="GO:0005769">
    <property type="term" value="C:early endosome"/>
    <property type="evidence" value="ECO:0007669"/>
    <property type="project" value="TreeGrafter"/>
</dbReference>
<dbReference type="GO" id="GO:0010008">
    <property type="term" value="C:endosome membrane"/>
    <property type="evidence" value="ECO:0007669"/>
    <property type="project" value="UniProtKB-SubCell"/>
</dbReference>
<dbReference type="GO" id="GO:0000139">
    <property type="term" value="C:Golgi membrane"/>
    <property type="evidence" value="ECO:0007669"/>
    <property type="project" value="UniProtKB-SubCell"/>
</dbReference>
<dbReference type="GO" id="GO:0005886">
    <property type="term" value="C:plasma membrane"/>
    <property type="evidence" value="ECO:0007669"/>
    <property type="project" value="UniProtKB-SubCell"/>
</dbReference>
<dbReference type="GO" id="GO:0008021">
    <property type="term" value="C:synaptic vesicle"/>
    <property type="evidence" value="ECO:0007669"/>
    <property type="project" value="TreeGrafter"/>
</dbReference>
<dbReference type="GO" id="GO:0015297">
    <property type="term" value="F:antiporter activity"/>
    <property type="evidence" value="ECO:0007669"/>
    <property type="project" value="UniProtKB-KW"/>
</dbReference>
<dbReference type="GO" id="GO:0005524">
    <property type="term" value="F:ATP binding"/>
    <property type="evidence" value="ECO:0007669"/>
    <property type="project" value="UniProtKB-KW"/>
</dbReference>
<dbReference type="GO" id="GO:0005247">
    <property type="term" value="F:voltage-gated chloride channel activity"/>
    <property type="evidence" value="ECO:0007669"/>
    <property type="project" value="InterPro"/>
</dbReference>
<dbReference type="CDD" id="cd04591">
    <property type="entry name" value="CBS_pair_voltage-gated_CLC_euk_bac"/>
    <property type="match status" value="1"/>
</dbReference>
<dbReference type="CDD" id="cd03684">
    <property type="entry name" value="ClC_3_like"/>
    <property type="match status" value="1"/>
</dbReference>
<dbReference type="FunFam" id="3.10.580.20:FF:000001">
    <property type="entry name" value="Chloride channel protein"/>
    <property type="match status" value="1"/>
</dbReference>
<dbReference type="FunFam" id="3.90.1280.20:FF:000001">
    <property type="entry name" value="Chloride channel protein"/>
    <property type="match status" value="1"/>
</dbReference>
<dbReference type="FunFam" id="3.90.1280.20:FF:000002">
    <property type="entry name" value="Chloride channel protein"/>
    <property type="match status" value="1"/>
</dbReference>
<dbReference type="Gene3D" id="3.10.580.20">
    <property type="match status" value="1"/>
</dbReference>
<dbReference type="Gene3D" id="3.90.1280.20">
    <property type="match status" value="1"/>
</dbReference>
<dbReference type="Gene3D" id="1.10.3080.10">
    <property type="entry name" value="Clc chloride channel"/>
    <property type="match status" value="1"/>
</dbReference>
<dbReference type="InterPro" id="IPR000644">
    <property type="entry name" value="CBS_dom"/>
</dbReference>
<dbReference type="InterPro" id="IPR046342">
    <property type="entry name" value="CBS_dom_sf"/>
</dbReference>
<dbReference type="InterPro" id="IPR014743">
    <property type="entry name" value="Cl-channel_core"/>
</dbReference>
<dbReference type="InterPro" id="IPR002247">
    <property type="entry name" value="Cl_channel-5"/>
</dbReference>
<dbReference type="InterPro" id="IPR001807">
    <property type="entry name" value="ClC"/>
</dbReference>
<dbReference type="PANTHER" id="PTHR45711">
    <property type="entry name" value="CHLORIDE CHANNEL PROTEIN"/>
    <property type="match status" value="1"/>
</dbReference>
<dbReference type="PANTHER" id="PTHR45711:SF7">
    <property type="entry name" value="H(+)_CL(-) EXCHANGE TRANSPORTER 5"/>
    <property type="match status" value="1"/>
</dbReference>
<dbReference type="Pfam" id="PF00571">
    <property type="entry name" value="CBS"/>
    <property type="match status" value="2"/>
</dbReference>
<dbReference type="Pfam" id="PF00654">
    <property type="entry name" value="Voltage_CLC"/>
    <property type="match status" value="1"/>
</dbReference>
<dbReference type="PRINTS" id="PR00762">
    <property type="entry name" value="CLCHANNEL"/>
</dbReference>
<dbReference type="PRINTS" id="PR01116">
    <property type="entry name" value="CLCHANNEL5"/>
</dbReference>
<dbReference type="SMART" id="SM00116">
    <property type="entry name" value="CBS"/>
    <property type="match status" value="2"/>
</dbReference>
<dbReference type="SUPFAM" id="SSF54631">
    <property type="entry name" value="CBS-domain pair"/>
    <property type="match status" value="1"/>
</dbReference>
<dbReference type="SUPFAM" id="SSF81340">
    <property type="entry name" value="Clc chloride channel"/>
    <property type="match status" value="1"/>
</dbReference>
<dbReference type="PROSITE" id="PS51371">
    <property type="entry name" value="CBS"/>
    <property type="match status" value="2"/>
</dbReference>
<comment type="function">
    <text evidence="2 4">Proton-coupled chloride transporter. Functions as antiport system and exchanges chloride ions against protons. Important for normal acidification of the endosome lumen. May play an important role in renal tubular function (By similarity). The CLC channel family contains both chloride channels and proton-coupled anion transporters that exchange chloride or another anion for protons. The absence of conserved gating glutamate residues is typical for family members that function as channels (Probable).</text>
</comment>
<comment type="catalytic activity">
    <reaction evidence="2">
        <text>2 chloride(in) + H(+)(out) = 2 chloride(out) + H(+)(in)</text>
        <dbReference type="Rhea" id="RHEA:29567"/>
        <dbReference type="ChEBI" id="CHEBI:15378"/>
        <dbReference type="ChEBI" id="CHEBI:17996"/>
    </reaction>
</comment>
<comment type="subunit">
    <text evidence="2">Interacts with NEDD4 and NEDD4L.</text>
</comment>
<comment type="subcellular location">
    <subcellularLocation>
        <location evidence="2">Golgi apparatus membrane</location>
        <topology evidence="2">Multi-pass membrane protein</topology>
    </subcellularLocation>
    <subcellularLocation>
        <location evidence="2">Endosome membrane</location>
        <topology evidence="2">Multi-pass membrane protein</topology>
    </subcellularLocation>
    <subcellularLocation>
        <location evidence="2">Cell membrane</location>
        <topology evidence="2">Multi-pass membrane protein</topology>
    </subcellularLocation>
</comment>
<comment type="alternative products">
    <event type="alternative splicing"/>
    <isoform>
        <id>Q5RBK4-1</id>
        <name>1</name>
        <sequence type="displayed"/>
    </isoform>
    <isoform>
        <id>Q5RBK4-2</id>
        <name>2</name>
        <sequence type="described" ref="VSP_060657"/>
    </isoform>
</comment>
<comment type="PTM">
    <text evidence="2">Ubiquitinated by NEDD4L in the presence of albumin; which promotes endocytosis and proteasomal degradation.</text>
</comment>
<comment type="similarity">
    <text evidence="4">Belongs to the chloride channel (TC 2.A.49) family. ClC-5/CLCN5 subfamily.</text>
</comment>
<reference key="1">
    <citation type="submission" date="2004-11" db="EMBL/GenBank/DDBJ databases">
        <authorList>
            <consortium name="The German cDNA consortium"/>
        </authorList>
    </citation>
    <scope>NUCLEOTIDE SEQUENCE [LARGE SCALE MRNA] (ISOFORM 2)</scope>
    <source>
        <tissue>Kidney</tissue>
    </source>
</reference>
<reference evidence="5" key="2">
    <citation type="submission" date="2008-02" db="EMBL/GenBank/DDBJ databases">
        <title>A 6x draft sequence assembly of the Pongo pygmaeus abelii genome.</title>
        <authorList>
            <person name="Wilson R.K."/>
            <person name="Mardis E."/>
        </authorList>
    </citation>
    <scope>NUCLEOTIDE SEQUENCE [LARGE SCALE GENOMIC DNA]</scope>
</reference>
<protein>
    <recommendedName>
        <fullName>H(+)/Cl(-) exchange transporter 5</fullName>
    </recommendedName>
    <alternativeName>
        <fullName>Chloride channel protein 5</fullName>
        <shortName>ClC-5</shortName>
    </alternativeName>
    <alternativeName>
        <fullName>Chloride transporter ClC-5</fullName>
    </alternativeName>
</protein>
<gene>
    <name type="primary">CLCN5</name>
</gene>
<keyword id="KW-0025">Alternative splicing</keyword>
<keyword id="KW-0050">Antiport</keyword>
<keyword id="KW-0067">ATP-binding</keyword>
<keyword id="KW-0129">CBS domain</keyword>
<keyword id="KW-1003">Cell membrane</keyword>
<keyword id="KW-0868">Chloride</keyword>
<keyword id="KW-0967">Endosome</keyword>
<keyword id="KW-0333">Golgi apparatus</keyword>
<keyword id="KW-0406">Ion transport</keyword>
<keyword id="KW-0472">Membrane</keyword>
<keyword id="KW-0547">Nucleotide-binding</keyword>
<keyword id="KW-1185">Reference proteome</keyword>
<keyword id="KW-0677">Repeat</keyword>
<keyword id="KW-0812">Transmembrane</keyword>
<keyword id="KW-1133">Transmembrane helix</keyword>
<keyword id="KW-0813">Transport</keyword>
<keyword id="KW-0832">Ubl conjugation</keyword>
<name>CLCN5_PONAB</name>
<feature type="chain" id="PRO_0000305929" description="H(+)/Cl(-) exchange transporter 5">
    <location>
        <begin position="1"/>
        <end position="816"/>
    </location>
</feature>
<feature type="topological domain" description="Cytoplasmic" evidence="1">
    <location>
        <begin position="1"/>
        <end position="124"/>
    </location>
</feature>
<feature type="transmembrane region" description="Helical" evidence="1">
    <location>
        <begin position="125"/>
        <end position="162"/>
    </location>
</feature>
<feature type="transmembrane region" description="Helical" evidence="1">
    <location>
        <begin position="208"/>
        <end position="231"/>
    </location>
</feature>
<feature type="intramembrane region" description="Helical" evidence="1">
    <location>
        <begin position="240"/>
        <end position="247"/>
    </location>
</feature>
<feature type="transmembrane region" description="Helical" evidence="1">
    <location>
        <begin position="256"/>
        <end position="275"/>
    </location>
</feature>
<feature type="transmembrane region" description="Helical" evidence="1">
    <location>
        <begin position="281"/>
        <end position="300"/>
    </location>
</feature>
<feature type="intramembrane region" description="Helical" evidence="1">
    <location>
        <begin position="312"/>
        <end position="324"/>
    </location>
</feature>
<feature type="intramembrane region" description="Helical" evidence="1">
    <location>
        <begin position="328"/>
        <end position="336"/>
    </location>
</feature>
<feature type="transmembrane region" description="Helical" evidence="1">
    <location>
        <begin position="348"/>
        <end position="366"/>
    </location>
</feature>
<feature type="transmembrane region" description="Helical" evidence="1">
    <location>
        <begin position="389"/>
        <end position="414"/>
    </location>
</feature>
<feature type="transmembrane region" description="Helical" evidence="1">
    <location>
        <begin position="422"/>
        <end position="442"/>
    </location>
</feature>
<feature type="transmembrane region" description="Helical" evidence="1">
    <location>
        <begin position="498"/>
        <end position="518"/>
    </location>
</feature>
<feature type="transmembrane region" description="Helical" evidence="1">
    <location>
        <begin position="523"/>
        <end position="542"/>
    </location>
</feature>
<feature type="intramembrane region" description="Helical" evidence="1">
    <location>
        <begin position="570"/>
        <end position="584"/>
    </location>
</feature>
<feature type="intramembrane region" description="Note=Loop between two helices" evidence="1">
    <location>
        <begin position="585"/>
        <end position="587"/>
    </location>
</feature>
<feature type="intramembrane region" description="Helical" evidence="1">
    <location>
        <begin position="588"/>
        <end position="599"/>
    </location>
</feature>
<feature type="intramembrane region" description="Note=Loop between two helices" evidence="1">
    <location>
        <begin position="600"/>
        <end position="604"/>
    </location>
</feature>
<feature type="transmembrane region" description="Helical" evidence="1">
    <location>
        <begin position="605"/>
        <end position="622"/>
    </location>
</feature>
<feature type="topological domain" description="Cytoplasmic" evidence="1">
    <location>
        <begin position="623"/>
        <end position="816"/>
    </location>
</feature>
<feature type="domain" description="CBS 1" evidence="3">
    <location>
        <begin position="656"/>
        <end position="720"/>
    </location>
</feature>
<feature type="domain" description="CBS 2" evidence="3">
    <location>
        <begin position="752"/>
        <end position="812"/>
    </location>
</feature>
<feature type="short sequence motif" description="Selectivity filter part_1" evidence="1">
    <location>
        <begin position="237"/>
        <end position="241"/>
    </location>
</feature>
<feature type="short sequence motif" description="Selectivity filter part_2" evidence="1">
    <location>
        <begin position="279"/>
        <end position="283"/>
    </location>
</feature>
<feature type="short sequence motif" description="Selectivity filter part_3" evidence="1">
    <location>
        <begin position="523"/>
        <end position="527"/>
    </location>
</feature>
<feature type="binding site" evidence="1">
    <location>
        <position position="238"/>
    </location>
    <ligand>
        <name>chloride</name>
        <dbReference type="ChEBI" id="CHEBI:17996"/>
    </ligand>
</feature>
<feature type="binding site" evidence="1">
    <location>
        <position position="525"/>
    </location>
    <ligand>
        <name>chloride</name>
        <dbReference type="ChEBI" id="CHEBI:17996"/>
    </ligand>
</feature>
<feature type="binding site" evidence="1">
    <location>
        <position position="628"/>
    </location>
    <ligand>
        <name>chloride</name>
        <dbReference type="ChEBI" id="CHEBI:17996"/>
    </ligand>
</feature>
<feature type="binding site" evidence="2">
    <location>
        <position position="666"/>
    </location>
    <ligand>
        <name>ATP</name>
        <dbReference type="ChEBI" id="CHEBI:30616"/>
    </ligand>
</feature>
<feature type="binding site" evidence="2">
    <location>
        <begin position="687"/>
        <end position="689"/>
    </location>
    <ligand>
        <name>ATP</name>
        <dbReference type="ChEBI" id="CHEBI:30616"/>
    </ligand>
</feature>
<feature type="binding site" evidence="2">
    <location>
        <begin position="794"/>
        <end position="797"/>
    </location>
    <ligand>
        <name>ATP</name>
        <dbReference type="ChEBI" id="CHEBI:30616"/>
    </ligand>
</feature>
<feature type="site" description="Mediates proton transfer from the outer aqueous phase to the interior of the protein; involved in linking H(+) and Cl(-) transport" evidence="1">
    <location>
        <position position="281"/>
    </location>
</feature>
<feature type="site" description="Mediates proton transfer from the protein to the inner aqueous phase" evidence="1">
    <location>
        <position position="338"/>
    </location>
</feature>
<feature type="splice variant" id="VSP_060657" description="In isoform 2." evidence="4">
    <location>
        <begin position="1"/>
        <end position="70"/>
    </location>
</feature>
<accession>Q5RBK4</accession>
<accession>A0A2J8S2P9</accession>
<accession>K7ETW2</accession>
<evidence type="ECO:0000250" key="1"/>
<evidence type="ECO:0000250" key="2">
    <source>
        <dbReference type="UniProtKB" id="P51795"/>
    </source>
</evidence>
<evidence type="ECO:0000255" key="3">
    <source>
        <dbReference type="PROSITE-ProRule" id="PRU00703"/>
    </source>
</evidence>
<evidence type="ECO:0000305" key="4"/>
<evidence type="ECO:0000312" key="5">
    <source>
        <dbReference type="Proteomes" id="UP000001595"/>
    </source>
</evidence>
<organism>
    <name type="scientific">Pongo abelii</name>
    <name type="common">Sumatran orangutan</name>
    <name type="synonym">Pongo pygmaeus abelii</name>
    <dbReference type="NCBI Taxonomy" id="9601"/>
    <lineage>
        <taxon>Eukaryota</taxon>
        <taxon>Metazoa</taxon>
        <taxon>Chordata</taxon>
        <taxon>Craniata</taxon>
        <taxon>Vertebrata</taxon>
        <taxon>Euteleostomi</taxon>
        <taxon>Mammalia</taxon>
        <taxon>Eutheria</taxon>
        <taxon>Euarchontoglires</taxon>
        <taxon>Primates</taxon>
        <taxon>Haplorrhini</taxon>
        <taxon>Catarrhini</taxon>
        <taxon>Hominidae</taxon>
        <taxon>Pongo</taxon>
    </lineage>
</organism>
<sequence>MAMWQGAMDNRGFQRGSFSSFQNSSSDEDLMDIPATAMDFSMRDDVPPLDREVGEDKSYNGGGIGSSNRIMDFLEEPIPGVGTYDDFNTIDWVREKSRDRDRHREITNKSKESTWALIHSVSDAFSGWLLMLLIGLLSGSLAGLIDISAHWMTDLKEGICTGGFWFNHEHCCWNSEHVTFEERDKCPEWNSWSQLIISTDEGAFAYIVNYFMYVLWALLFAFLAVSLVKVFAPYACGSGIPEIKTILSGFIIRGYLGKWTLVIKTITLVLAVSSGLSLGKEGPLVHVACCCGNILCHCFNKYRKNEAKRREVLSAAAAAGVSVAFGAPIGGVLFSLEEVSYYFPLKTLWRSFFAALVAAFTLRSINPFGNSRLVLFYVEFHTPWHLFELVPFILLGIFGGLWGALFIRTNIAWCRKRKTTQLGKYPVIEVLVVTAITAILAFPNEYTRMSTSELISELFNDCGLLDSSKLCDYENRFNTSKGGELPDRPAGVGVYSAMWQLALTLILKIVITIFTFGMKIPSGLFIPSMAVGAIAGRLLGVGMEQLAYYHQEWTVFNSWCSQGADCITPGLYAMVGAAACLGGVTRMTVSLVVIMFELTGGLEYIVPLMAAAMTSKWVADALGREGIYDAHIRLNGYPFLEAKEEFAHKTLAMDVMKPRRNDPLLTVLTQDSMTVEDVETIISETTYSGFPVVVSRESQRLVGFVLRRDLIISIENARKKQDGVVSTSIIYFTEHSPPLPPYTPPTLKLRNILDLSPFTVTDLTPMEIVVDIFRKLGLRQCLVTHNGRLLGIITKKDVLKHIAQMANQDPDSILFN</sequence>
<proteinExistence type="evidence at transcript level"/>